<comment type="function">
    <text evidence="1">Hydrolyzes ribosome-free peptidyl-tRNAs (with 1 or more amino acids incorporated), which drop off the ribosome during protein synthesis, or as a result of ribosome stalling.</text>
</comment>
<comment type="function">
    <text evidence="1">Catalyzes the release of premature peptidyl moieties from peptidyl-tRNA molecules trapped in stalled 50S ribosomal subunits, and thus maintains levels of free tRNAs and 50S ribosomes.</text>
</comment>
<comment type="catalytic activity">
    <reaction evidence="1">
        <text>an N-acyl-L-alpha-aminoacyl-tRNA + H2O = an N-acyl-L-amino acid + a tRNA + H(+)</text>
        <dbReference type="Rhea" id="RHEA:54448"/>
        <dbReference type="Rhea" id="RHEA-COMP:10123"/>
        <dbReference type="Rhea" id="RHEA-COMP:13883"/>
        <dbReference type="ChEBI" id="CHEBI:15377"/>
        <dbReference type="ChEBI" id="CHEBI:15378"/>
        <dbReference type="ChEBI" id="CHEBI:59874"/>
        <dbReference type="ChEBI" id="CHEBI:78442"/>
        <dbReference type="ChEBI" id="CHEBI:138191"/>
        <dbReference type="EC" id="3.1.1.29"/>
    </reaction>
</comment>
<comment type="subunit">
    <text evidence="1">Monomer.</text>
</comment>
<comment type="subcellular location">
    <subcellularLocation>
        <location evidence="1">Cytoplasm</location>
    </subcellularLocation>
</comment>
<comment type="similarity">
    <text evidence="1">Belongs to the PTH family.</text>
</comment>
<protein>
    <recommendedName>
        <fullName evidence="1">Peptidyl-tRNA hydrolase</fullName>
        <shortName evidence="1">Pth</shortName>
        <ecNumber evidence="1">3.1.1.29</ecNumber>
    </recommendedName>
</protein>
<keyword id="KW-0963">Cytoplasm</keyword>
<keyword id="KW-0378">Hydrolase</keyword>
<keyword id="KW-0694">RNA-binding</keyword>
<keyword id="KW-0820">tRNA-binding</keyword>
<sequence length="189" mass="21169">MVKMIVGLGNPGSKYEKTKHNIGFMAIDNIVKNLDVTFTDDKNFKAQIGSTFINHEKVYFVKPTTFMNNSGIAVKALLTYYNIDITDLIVIYDDLDMEVSKLRLRSKGSAGGHNGIKSIIAHIGTQEFNRIKVGIGRPLKGMTVISHVMGQFNTEDNIAISLTLDRVVNAVKFYLQENDFEKTMQKFNG</sequence>
<evidence type="ECO:0000255" key="1">
    <source>
        <dbReference type="HAMAP-Rule" id="MF_00083"/>
    </source>
</evidence>
<accession>Q8P327</accession>
<proteinExistence type="inferred from homology"/>
<gene>
    <name evidence="1" type="primary">pth</name>
    <name type="ordered locus">spyM18_0005</name>
</gene>
<reference key="1">
    <citation type="journal article" date="2002" name="Proc. Natl. Acad. Sci. U.S.A.">
        <title>Genome sequence and comparative microarray analysis of serotype M18 group A Streptococcus strains associated with acute rheumatic fever outbreaks.</title>
        <authorList>
            <person name="Smoot J.C."/>
            <person name="Barbian K.D."/>
            <person name="Van Gompel J.J."/>
            <person name="Smoot L.M."/>
            <person name="Chaussee M.S."/>
            <person name="Sylva G.L."/>
            <person name="Sturdevant D.E."/>
            <person name="Ricklefs S.M."/>
            <person name="Porcella S.F."/>
            <person name="Parkins L.D."/>
            <person name="Beres S.B."/>
            <person name="Campbell D.S."/>
            <person name="Smith T.M."/>
            <person name="Zhang Q."/>
            <person name="Kapur V."/>
            <person name="Daly J.A."/>
            <person name="Veasy L.G."/>
            <person name="Musser J.M."/>
        </authorList>
    </citation>
    <scope>NUCLEOTIDE SEQUENCE [LARGE SCALE GENOMIC DNA]</scope>
    <source>
        <strain>MGAS8232</strain>
    </source>
</reference>
<dbReference type="EC" id="3.1.1.29" evidence="1"/>
<dbReference type="EMBL" id="AE009949">
    <property type="protein sequence ID" value="AAL96840.1"/>
    <property type="molecule type" value="Genomic_DNA"/>
</dbReference>
<dbReference type="RefSeq" id="WP_011017221.1">
    <property type="nucleotide sequence ID" value="NC_003485.1"/>
</dbReference>
<dbReference type="SMR" id="Q8P327"/>
<dbReference type="KEGG" id="spm:spyM18_0005"/>
<dbReference type="HOGENOM" id="CLU_062456_4_1_9"/>
<dbReference type="GO" id="GO:0005737">
    <property type="term" value="C:cytoplasm"/>
    <property type="evidence" value="ECO:0007669"/>
    <property type="project" value="UniProtKB-SubCell"/>
</dbReference>
<dbReference type="GO" id="GO:0004045">
    <property type="term" value="F:peptidyl-tRNA hydrolase activity"/>
    <property type="evidence" value="ECO:0007669"/>
    <property type="project" value="UniProtKB-UniRule"/>
</dbReference>
<dbReference type="GO" id="GO:0000049">
    <property type="term" value="F:tRNA binding"/>
    <property type="evidence" value="ECO:0007669"/>
    <property type="project" value="UniProtKB-UniRule"/>
</dbReference>
<dbReference type="GO" id="GO:0006515">
    <property type="term" value="P:protein quality control for misfolded or incompletely synthesized proteins"/>
    <property type="evidence" value="ECO:0007669"/>
    <property type="project" value="UniProtKB-UniRule"/>
</dbReference>
<dbReference type="GO" id="GO:0072344">
    <property type="term" value="P:rescue of stalled ribosome"/>
    <property type="evidence" value="ECO:0007669"/>
    <property type="project" value="UniProtKB-UniRule"/>
</dbReference>
<dbReference type="CDD" id="cd00462">
    <property type="entry name" value="PTH"/>
    <property type="match status" value="1"/>
</dbReference>
<dbReference type="FunFam" id="3.40.50.1470:FF:000001">
    <property type="entry name" value="Peptidyl-tRNA hydrolase"/>
    <property type="match status" value="1"/>
</dbReference>
<dbReference type="Gene3D" id="3.40.50.1470">
    <property type="entry name" value="Peptidyl-tRNA hydrolase"/>
    <property type="match status" value="1"/>
</dbReference>
<dbReference type="HAMAP" id="MF_00083">
    <property type="entry name" value="Pept_tRNA_hydro_bact"/>
    <property type="match status" value="1"/>
</dbReference>
<dbReference type="InterPro" id="IPR001328">
    <property type="entry name" value="Pept_tRNA_hydro"/>
</dbReference>
<dbReference type="InterPro" id="IPR018171">
    <property type="entry name" value="Pept_tRNA_hydro_CS"/>
</dbReference>
<dbReference type="InterPro" id="IPR036416">
    <property type="entry name" value="Pept_tRNA_hydro_sf"/>
</dbReference>
<dbReference type="NCBIfam" id="TIGR00447">
    <property type="entry name" value="pth"/>
    <property type="match status" value="1"/>
</dbReference>
<dbReference type="PANTHER" id="PTHR17224">
    <property type="entry name" value="PEPTIDYL-TRNA HYDROLASE"/>
    <property type="match status" value="1"/>
</dbReference>
<dbReference type="PANTHER" id="PTHR17224:SF1">
    <property type="entry name" value="PEPTIDYL-TRNA HYDROLASE"/>
    <property type="match status" value="1"/>
</dbReference>
<dbReference type="Pfam" id="PF01195">
    <property type="entry name" value="Pept_tRNA_hydro"/>
    <property type="match status" value="1"/>
</dbReference>
<dbReference type="SUPFAM" id="SSF53178">
    <property type="entry name" value="Peptidyl-tRNA hydrolase-like"/>
    <property type="match status" value="1"/>
</dbReference>
<dbReference type="PROSITE" id="PS01195">
    <property type="entry name" value="PEPT_TRNA_HYDROL_1"/>
    <property type="match status" value="1"/>
</dbReference>
<dbReference type="PROSITE" id="PS01196">
    <property type="entry name" value="PEPT_TRNA_HYDROL_2"/>
    <property type="match status" value="1"/>
</dbReference>
<organism>
    <name type="scientific">Streptococcus pyogenes serotype M18 (strain MGAS8232)</name>
    <dbReference type="NCBI Taxonomy" id="186103"/>
    <lineage>
        <taxon>Bacteria</taxon>
        <taxon>Bacillati</taxon>
        <taxon>Bacillota</taxon>
        <taxon>Bacilli</taxon>
        <taxon>Lactobacillales</taxon>
        <taxon>Streptococcaceae</taxon>
        <taxon>Streptococcus</taxon>
    </lineage>
</organism>
<feature type="chain" id="PRO_0000187833" description="Peptidyl-tRNA hydrolase">
    <location>
        <begin position="1"/>
        <end position="189"/>
    </location>
</feature>
<feature type="active site" description="Proton acceptor" evidence="1">
    <location>
        <position position="20"/>
    </location>
</feature>
<feature type="binding site" evidence="1">
    <location>
        <position position="15"/>
    </location>
    <ligand>
        <name>tRNA</name>
        <dbReference type="ChEBI" id="CHEBI:17843"/>
    </ligand>
</feature>
<feature type="binding site" evidence="1">
    <location>
        <position position="66"/>
    </location>
    <ligand>
        <name>tRNA</name>
        <dbReference type="ChEBI" id="CHEBI:17843"/>
    </ligand>
</feature>
<feature type="binding site" evidence="1">
    <location>
        <position position="68"/>
    </location>
    <ligand>
        <name>tRNA</name>
        <dbReference type="ChEBI" id="CHEBI:17843"/>
    </ligand>
</feature>
<feature type="binding site" evidence="1">
    <location>
        <position position="114"/>
    </location>
    <ligand>
        <name>tRNA</name>
        <dbReference type="ChEBI" id="CHEBI:17843"/>
    </ligand>
</feature>
<feature type="site" description="Discriminates between blocked and unblocked aminoacyl-tRNA" evidence="1">
    <location>
        <position position="10"/>
    </location>
</feature>
<feature type="site" description="Stabilizes the basic form of H active site to accept a proton" evidence="1">
    <location>
        <position position="93"/>
    </location>
</feature>
<name>PTH_STRP8</name>